<comment type="function">
    <text evidence="1">Specifically methylates the N7 position of guanine in position 518 of 16S rRNA.</text>
</comment>
<comment type="subcellular location">
    <subcellularLocation>
        <location evidence="1">Cytoplasm</location>
    </subcellularLocation>
</comment>
<comment type="similarity">
    <text evidence="1">Belongs to the methyltransferase superfamily. RNA methyltransferase RsmG family.</text>
</comment>
<evidence type="ECO:0000255" key="1">
    <source>
        <dbReference type="HAMAP-Rule" id="MF_00074"/>
    </source>
</evidence>
<evidence type="ECO:0000256" key="2">
    <source>
        <dbReference type="SAM" id="MobiDB-lite"/>
    </source>
</evidence>
<feature type="chain" id="PRO_0000335378" description="Ribosomal RNA small subunit methyltransferase G">
    <location>
        <begin position="1"/>
        <end position="225"/>
    </location>
</feature>
<feature type="region of interest" description="Disordered" evidence="2">
    <location>
        <begin position="204"/>
        <end position="225"/>
    </location>
</feature>
<feature type="binding site" evidence="1">
    <location>
        <position position="71"/>
    </location>
    <ligand>
        <name>S-adenosyl-L-methionine</name>
        <dbReference type="ChEBI" id="CHEBI:59789"/>
    </ligand>
</feature>
<feature type="binding site" evidence="1">
    <location>
        <position position="76"/>
    </location>
    <ligand>
        <name>S-adenosyl-L-methionine</name>
        <dbReference type="ChEBI" id="CHEBI:59789"/>
    </ligand>
</feature>
<feature type="binding site" evidence="1">
    <location>
        <begin position="121"/>
        <end position="122"/>
    </location>
    <ligand>
        <name>S-adenosyl-L-methionine</name>
        <dbReference type="ChEBI" id="CHEBI:59789"/>
    </ligand>
</feature>
<feature type="binding site" evidence="1">
    <location>
        <position position="139"/>
    </location>
    <ligand>
        <name>S-adenosyl-L-methionine</name>
        <dbReference type="ChEBI" id="CHEBI:59789"/>
    </ligand>
</feature>
<reference key="1">
    <citation type="submission" date="2006-12" db="EMBL/GenBank/DDBJ databases">
        <title>Complete sequence of chromosome of Mycobacterium sp. KMS.</title>
        <authorList>
            <consortium name="US DOE Joint Genome Institute"/>
            <person name="Copeland A."/>
            <person name="Lucas S."/>
            <person name="Lapidus A."/>
            <person name="Barry K."/>
            <person name="Detter J.C."/>
            <person name="Glavina del Rio T."/>
            <person name="Hammon N."/>
            <person name="Israni S."/>
            <person name="Dalin E."/>
            <person name="Tice H."/>
            <person name="Pitluck S."/>
            <person name="Kiss H."/>
            <person name="Brettin T."/>
            <person name="Bruce D."/>
            <person name="Han C."/>
            <person name="Tapia R."/>
            <person name="Gilna P."/>
            <person name="Schmutz J."/>
            <person name="Larimer F."/>
            <person name="Land M."/>
            <person name="Hauser L."/>
            <person name="Kyrpides N."/>
            <person name="Mikhailova N."/>
            <person name="Miller C.D."/>
            <person name="Richardson P."/>
        </authorList>
    </citation>
    <scope>NUCLEOTIDE SEQUENCE [LARGE SCALE GENOMIC DNA]</scope>
    <source>
        <strain>KMS</strain>
    </source>
</reference>
<dbReference type="EC" id="2.1.1.-" evidence="1"/>
<dbReference type="EMBL" id="CP000518">
    <property type="protein sequence ID" value="ABL89222.1"/>
    <property type="molecule type" value="Genomic_DNA"/>
</dbReference>
<dbReference type="SMR" id="A1U8R4"/>
<dbReference type="STRING" id="189918.Mkms_0003"/>
<dbReference type="KEGG" id="mkm:Mkms_0003"/>
<dbReference type="HOGENOM" id="CLU_065341_5_0_11"/>
<dbReference type="OrthoDB" id="9808773at2"/>
<dbReference type="GO" id="GO:0005829">
    <property type="term" value="C:cytosol"/>
    <property type="evidence" value="ECO:0007669"/>
    <property type="project" value="TreeGrafter"/>
</dbReference>
<dbReference type="GO" id="GO:0070043">
    <property type="term" value="F:rRNA (guanine-N7-)-methyltransferase activity"/>
    <property type="evidence" value="ECO:0007669"/>
    <property type="project" value="UniProtKB-UniRule"/>
</dbReference>
<dbReference type="CDD" id="cd02440">
    <property type="entry name" value="AdoMet_MTases"/>
    <property type="match status" value="1"/>
</dbReference>
<dbReference type="Gene3D" id="3.40.50.150">
    <property type="entry name" value="Vaccinia Virus protein VP39"/>
    <property type="match status" value="1"/>
</dbReference>
<dbReference type="HAMAP" id="MF_00074">
    <property type="entry name" value="16SrRNA_methyltr_G"/>
    <property type="match status" value="1"/>
</dbReference>
<dbReference type="InterPro" id="IPR003682">
    <property type="entry name" value="rRNA_ssu_MeTfrase_G"/>
</dbReference>
<dbReference type="InterPro" id="IPR029063">
    <property type="entry name" value="SAM-dependent_MTases_sf"/>
</dbReference>
<dbReference type="NCBIfam" id="TIGR00138">
    <property type="entry name" value="rsmG_gidB"/>
    <property type="match status" value="1"/>
</dbReference>
<dbReference type="PANTHER" id="PTHR31760">
    <property type="entry name" value="S-ADENOSYL-L-METHIONINE-DEPENDENT METHYLTRANSFERASES SUPERFAMILY PROTEIN"/>
    <property type="match status" value="1"/>
</dbReference>
<dbReference type="PANTHER" id="PTHR31760:SF0">
    <property type="entry name" value="S-ADENOSYL-L-METHIONINE-DEPENDENT METHYLTRANSFERASES SUPERFAMILY PROTEIN"/>
    <property type="match status" value="1"/>
</dbReference>
<dbReference type="Pfam" id="PF02527">
    <property type="entry name" value="GidB"/>
    <property type="match status" value="1"/>
</dbReference>
<dbReference type="PIRSF" id="PIRSF003078">
    <property type="entry name" value="GidB"/>
    <property type="match status" value="1"/>
</dbReference>
<dbReference type="SUPFAM" id="SSF53335">
    <property type="entry name" value="S-adenosyl-L-methionine-dependent methyltransferases"/>
    <property type="match status" value="1"/>
</dbReference>
<keyword id="KW-0963">Cytoplasm</keyword>
<keyword id="KW-0489">Methyltransferase</keyword>
<keyword id="KW-0698">rRNA processing</keyword>
<keyword id="KW-0949">S-adenosyl-L-methionine</keyword>
<keyword id="KW-0808">Transferase</keyword>
<proteinExistence type="inferred from homology"/>
<name>RSMG_MYCSK</name>
<accession>A1U8R4</accession>
<gene>
    <name evidence="1" type="primary">rsmG</name>
    <name type="ordered locus">Mkms_0003</name>
</gene>
<protein>
    <recommendedName>
        <fullName evidence="1">Ribosomal RNA small subunit methyltransferase G</fullName>
        <ecNumber evidence="1">2.1.1.-</ecNumber>
    </recommendedName>
    <alternativeName>
        <fullName evidence="1">16S rRNA 7-methylguanosine methyltransferase</fullName>
        <shortName evidence="1">16S rRNA m7G methyltransferase</shortName>
    </alternativeName>
</protein>
<organism>
    <name type="scientific">Mycobacterium sp. (strain KMS)</name>
    <dbReference type="NCBI Taxonomy" id="189918"/>
    <lineage>
        <taxon>Bacteria</taxon>
        <taxon>Bacillati</taxon>
        <taxon>Actinomycetota</taxon>
        <taxon>Actinomycetes</taxon>
        <taxon>Mycobacteriales</taxon>
        <taxon>Mycobacteriaceae</taxon>
        <taxon>Mycobacterium</taxon>
    </lineage>
</organism>
<sequence>MKHVAPPPTAEAVFGDRLPLAQRYAEFLATAGVERGLIGPRETDRIWDRHILNSAALGESVESGDRIADIGSGAGLPGIPLALARPDVHVTLIEPMQRRCEFLTEVVDALGVAVIVVRGRAENPAVRREVGEMDVVTSRAVGSLDKLATWSMGILREGGRMLALKGARAEAEIEENRRVLARAGAVDVRVLRCGADYLNPPATVVEARRATPSNGRGRPGRSSRR</sequence>